<sequence length="412" mass="44170">MNNSRVEGSSGRAARKLRFALMGPAFIAAIGYIDPGNFATNIQAGASFGYKLLWVVVWANLMAMLIQVLSAKLGIATGKNLAEQIRDHYPRPVVWFYWVQAEIIAMATDLAEFIGAAIGFKLILGVSLLQGAVLTGIATFLILMLQRRGQKPLELVIGGLLLFVAAAYIVELVFSQPNLVQLSKGMAIPSLPTSEAVFLAAGVLGATIMPHVIYLHSSLTQNAHDGTRQERYSATKWDVGIAMTIAGFVNLAMMATAAAAFHFNGHTGVADLDQAYLTLEPLLSHAAATIFGLSLVAAGLSSTVVGTLAGQVVMQGFVRFHIPLWVRRSVTMMPSFIVILMGLDPTRILVMSQVLLSFGIALALVPLLIFTGNKSLMGDLVNTTLVKRIGWMIVVLVVALNLWLLIGTLLGL</sequence>
<feature type="chain" id="PRO_1000058656" description="Divalent metal cation transporter MntH">
    <location>
        <begin position="1"/>
        <end position="412"/>
    </location>
</feature>
<feature type="transmembrane region" description="Helical" evidence="1">
    <location>
        <begin position="19"/>
        <end position="39"/>
    </location>
</feature>
<feature type="transmembrane region" description="Helical" evidence="1">
    <location>
        <begin position="46"/>
        <end position="66"/>
    </location>
</feature>
<feature type="transmembrane region" description="Helical" evidence="1">
    <location>
        <begin position="94"/>
        <end position="114"/>
    </location>
</feature>
<feature type="transmembrane region" description="Helical" evidence="1">
    <location>
        <begin position="122"/>
        <end position="142"/>
    </location>
</feature>
<feature type="transmembrane region" description="Helical" evidence="1">
    <location>
        <begin position="155"/>
        <end position="175"/>
    </location>
</feature>
<feature type="transmembrane region" description="Helical" evidence="1">
    <location>
        <begin position="196"/>
        <end position="216"/>
    </location>
</feature>
<feature type="transmembrane region" description="Helical" evidence="1">
    <location>
        <begin position="241"/>
        <end position="261"/>
    </location>
</feature>
<feature type="transmembrane region" description="Helical" evidence="1">
    <location>
        <begin position="290"/>
        <end position="310"/>
    </location>
</feature>
<feature type="transmembrane region" description="Helical" evidence="1">
    <location>
        <begin position="329"/>
        <end position="349"/>
    </location>
</feature>
<feature type="transmembrane region" description="Helical" evidence="1">
    <location>
        <begin position="350"/>
        <end position="370"/>
    </location>
</feature>
<feature type="transmembrane region" description="Helical" evidence="1">
    <location>
        <begin position="389"/>
        <end position="409"/>
    </location>
</feature>
<reference key="1">
    <citation type="journal article" date="2010" name="PLoS Genet.">
        <title>Genome sequence of the plant growth promoting endophytic bacterium Enterobacter sp. 638.</title>
        <authorList>
            <person name="Taghavi S."/>
            <person name="van der Lelie D."/>
            <person name="Hoffman A."/>
            <person name="Zhang Y.B."/>
            <person name="Walla M.D."/>
            <person name="Vangronsveld J."/>
            <person name="Newman L."/>
            <person name="Monchy S."/>
        </authorList>
    </citation>
    <scope>NUCLEOTIDE SEQUENCE [LARGE SCALE GENOMIC DNA]</scope>
    <source>
        <strain>638</strain>
    </source>
</reference>
<keyword id="KW-0997">Cell inner membrane</keyword>
<keyword id="KW-1003">Cell membrane</keyword>
<keyword id="KW-0406">Ion transport</keyword>
<keyword id="KW-0472">Membrane</keyword>
<keyword id="KW-0769">Symport</keyword>
<keyword id="KW-0812">Transmembrane</keyword>
<keyword id="KW-1133">Transmembrane helix</keyword>
<keyword id="KW-0813">Transport</keyword>
<name>MNTH_ENT38</name>
<accession>A4WD10</accession>
<dbReference type="EMBL" id="CP000653">
    <property type="protein sequence ID" value="ABP61590.1"/>
    <property type="molecule type" value="Genomic_DNA"/>
</dbReference>
<dbReference type="RefSeq" id="WP_015959923.1">
    <property type="nucleotide sequence ID" value="NC_009436.1"/>
</dbReference>
<dbReference type="SMR" id="A4WD10"/>
<dbReference type="STRING" id="399742.Ent638_2926"/>
<dbReference type="KEGG" id="ent:Ent638_2926"/>
<dbReference type="eggNOG" id="COG1914">
    <property type="taxonomic scope" value="Bacteria"/>
</dbReference>
<dbReference type="HOGENOM" id="CLU_020088_2_0_6"/>
<dbReference type="OrthoDB" id="9787548at2"/>
<dbReference type="Proteomes" id="UP000000230">
    <property type="component" value="Chromosome"/>
</dbReference>
<dbReference type="GO" id="GO:0005886">
    <property type="term" value="C:plasma membrane"/>
    <property type="evidence" value="ECO:0007669"/>
    <property type="project" value="UniProtKB-SubCell"/>
</dbReference>
<dbReference type="GO" id="GO:0015086">
    <property type="term" value="F:cadmium ion transmembrane transporter activity"/>
    <property type="evidence" value="ECO:0007669"/>
    <property type="project" value="TreeGrafter"/>
</dbReference>
<dbReference type="GO" id="GO:0005384">
    <property type="term" value="F:manganese ion transmembrane transporter activity"/>
    <property type="evidence" value="ECO:0007669"/>
    <property type="project" value="TreeGrafter"/>
</dbReference>
<dbReference type="GO" id="GO:0046872">
    <property type="term" value="F:metal ion binding"/>
    <property type="evidence" value="ECO:0007669"/>
    <property type="project" value="UniProtKB-UniRule"/>
</dbReference>
<dbReference type="GO" id="GO:0015293">
    <property type="term" value="F:symporter activity"/>
    <property type="evidence" value="ECO:0007669"/>
    <property type="project" value="UniProtKB-UniRule"/>
</dbReference>
<dbReference type="GO" id="GO:0034755">
    <property type="term" value="P:iron ion transmembrane transport"/>
    <property type="evidence" value="ECO:0007669"/>
    <property type="project" value="TreeGrafter"/>
</dbReference>
<dbReference type="HAMAP" id="MF_00221">
    <property type="entry name" value="NRAMP"/>
    <property type="match status" value="1"/>
</dbReference>
<dbReference type="InterPro" id="IPR001046">
    <property type="entry name" value="NRAMP_fam"/>
</dbReference>
<dbReference type="NCBIfam" id="TIGR01197">
    <property type="entry name" value="nramp"/>
    <property type="match status" value="1"/>
</dbReference>
<dbReference type="NCBIfam" id="NF037982">
    <property type="entry name" value="Nramp_1"/>
    <property type="match status" value="1"/>
</dbReference>
<dbReference type="NCBIfam" id="NF001923">
    <property type="entry name" value="PRK00701.1"/>
    <property type="match status" value="1"/>
</dbReference>
<dbReference type="PANTHER" id="PTHR11706:SF33">
    <property type="entry name" value="NATURAL RESISTANCE-ASSOCIATED MACROPHAGE PROTEIN 2"/>
    <property type="match status" value="1"/>
</dbReference>
<dbReference type="PANTHER" id="PTHR11706">
    <property type="entry name" value="SOLUTE CARRIER PROTEIN FAMILY 11 MEMBER"/>
    <property type="match status" value="1"/>
</dbReference>
<dbReference type="Pfam" id="PF01566">
    <property type="entry name" value="Nramp"/>
    <property type="match status" value="1"/>
</dbReference>
<dbReference type="PRINTS" id="PR00447">
    <property type="entry name" value="NATRESASSCMP"/>
</dbReference>
<evidence type="ECO:0000255" key="1">
    <source>
        <dbReference type="HAMAP-Rule" id="MF_00221"/>
    </source>
</evidence>
<comment type="function">
    <text evidence="1">H(+)-stimulated, divalent metal cation uptake system.</text>
</comment>
<comment type="subcellular location">
    <subcellularLocation>
        <location evidence="1">Cell inner membrane</location>
        <topology evidence="1">Multi-pass membrane protein</topology>
    </subcellularLocation>
</comment>
<comment type="similarity">
    <text evidence="1">Belongs to the NRAMP family.</text>
</comment>
<protein>
    <recommendedName>
        <fullName evidence="1">Divalent metal cation transporter MntH</fullName>
    </recommendedName>
</protein>
<proteinExistence type="inferred from homology"/>
<gene>
    <name evidence="1" type="primary">mntH</name>
    <name type="ordered locus">Ent638_2926</name>
</gene>
<organism>
    <name type="scientific">Enterobacter sp. (strain 638)</name>
    <dbReference type="NCBI Taxonomy" id="399742"/>
    <lineage>
        <taxon>Bacteria</taxon>
        <taxon>Pseudomonadati</taxon>
        <taxon>Pseudomonadota</taxon>
        <taxon>Gammaproteobacteria</taxon>
        <taxon>Enterobacterales</taxon>
        <taxon>Enterobacteriaceae</taxon>
        <taxon>Enterobacter</taxon>
    </lineage>
</organism>